<evidence type="ECO:0000250" key="1">
    <source>
        <dbReference type="UniProtKB" id="P20711"/>
    </source>
</evidence>
<evidence type="ECO:0000256" key="2">
    <source>
        <dbReference type="SAM" id="MobiDB-lite"/>
    </source>
</evidence>
<evidence type="ECO:0000269" key="3">
    <source>
    </source>
</evidence>
<evidence type="ECO:0000269" key="4">
    <source>
    </source>
</evidence>
<evidence type="ECO:0000303" key="5">
    <source>
    </source>
</evidence>
<evidence type="ECO:0000303" key="6">
    <source>
    </source>
</evidence>
<evidence type="ECO:0000305" key="7"/>
<evidence type="ECO:0000312" key="8">
    <source>
        <dbReference type="EMBL" id="BAB56067.1"/>
    </source>
</evidence>
<evidence type="ECO:0000312" key="9">
    <source>
        <dbReference type="EMBL" id="BAF06290.1"/>
    </source>
</evidence>
<feature type="chain" id="PRO_0000444621" description="Tyrosine decarboxylase">
    <location>
        <begin position="1"/>
        <end position="533"/>
    </location>
</feature>
<feature type="region of interest" description="Disordered" evidence="2">
    <location>
        <begin position="1"/>
        <end position="22"/>
    </location>
</feature>
<feature type="binding site" evidence="1">
    <location>
        <position position="281"/>
    </location>
    <ligand>
        <name>pyridoxal 5'-phosphate</name>
        <dbReference type="ChEBI" id="CHEBI:597326"/>
    </ligand>
</feature>
<feature type="binding site" evidence="1">
    <location>
        <position position="336"/>
    </location>
    <ligand>
        <name>pyridoxal 5'-phosphate</name>
        <dbReference type="ChEBI" id="CHEBI:597326"/>
    </ligand>
</feature>
<feature type="modified residue" description="N6-(pyridoxal phosphate)lysine" evidence="1">
    <location>
        <position position="339"/>
    </location>
</feature>
<feature type="sequence conflict" description="In Ref. 1; BAD35168." evidence="7" ref="1">
    <original>I</original>
    <variation>F</variation>
    <location>
        <position position="231"/>
    </location>
</feature>
<feature type="sequence conflict" description="In Ref. 1; BAD35168." evidence="7" ref="1">
    <original>D</original>
    <variation>N</variation>
    <location>
        <position position="307"/>
    </location>
</feature>
<protein>
    <recommendedName>
        <fullName evidence="6">Tyrosine decarboxylase</fullName>
        <shortName evidence="7">OsTyDC</shortName>
        <ecNumber evidence="4">4.1.1.25</ecNumber>
    </recommendedName>
    <alternativeName>
        <fullName evidence="5">Trypthophan decarboxylase</fullName>
    </alternativeName>
</protein>
<sequence>MAPPSHCHTINGGAPRNGAIPEVETTTSTPAASDTALLLDADEFRRLGHQVVDFIADYYAGLGDYPVHPSVTPGFLRRQLPADAPSRPEPEAFAAALRDVRDLILPGVTHWQSPRHFAHFPASSSTVGALGEALAAGINVVPFTWAASPAATELEMVVVDWLGRALHLPESLLFAGGGGGTILGTSCEAVLCALVAARDRKLAEIGARRIGDLVVYCSDQTHFAFRKAARIAGIPREHCREIPTCRDDVFALSPTALHAAMQADVDAGLVPLFLCATVGTTQTTAVDPVRELCAVAARHGGVWVHVDAAYAGSALVCPEFRDVIAGAEAVDSLSMNAHKWLLANNDCCAVWVAAPSALVAALGTEQEYILRDAAAEGHDVVDYKDWGTTLTRRFRALKVWLVLRCYGVEGLRSHVRSHVAMAAAFEAMVRGDARFEVVAPRRFALVCFRLRSPPERLGVGVGVGGEKAANELNRRLLEEVNAASSGPYMSSAMVGGVYMLRCAIGSTLTEERHVREAWKVVQERATSILRKRG</sequence>
<reference key="1">
    <citation type="journal article" date="2004" name="J. Gen. Plant Pathol.">
        <title>DNA fragmentation in Sekiguchi lesion mutants of rice infected with Magnaporthe grisea.</title>
        <authorList>
            <person name="Ueno M."/>
            <person name="Kihara J."/>
            <person name="Honda Y."/>
            <person name="Isota J."/>
            <person name="Arase S."/>
        </authorList>
    </citation>
    <scope>NUCLEOTIDE SEQUENCE [GENOMIC DNA]</scope>
    <scope>FUNCTION</scope>
</reference>
<reference key="2">
    <citation type="journal article" date="2002" name="Nature">
        <title>The genome sequence and structure of rice chromosome 1.</title>
        <authorList>
            <person name="Sasaki T."/>
            <person name="Matsumoto T."/>
            <person name="Yamamoto K."/>
            <person name="Sakata K."/>
            <person name="Baba T."/>
            <person name="Katayose Y."/>
            <person name="Wu J."/>
            <person name="Niimura Y."/>
            <person name="Cheng Z."/>
            <person name="Nagamura Y."/>
            <person name="Antonio B.A."/>
            <person name="Kanamori H."/>
            <person name="Hosokawa S."/>
            <person name="Masukawa M."/>
            <person name="Arikawa K."/>
            <person name="Chiden Y."/>
            <person name="Hayashi M."/>
            <person name="Okamoto M."/>
            <person name="Ando T."/>
            <person name="Aoki H."/>
            <person name="Arita K."/>
            <person name="Hamada M."/>
            <person name="Harada C."/>
            <person name="Hijishita S."/>
            <person name="Honda M."/>
            <person name="Ichikawa Y."/>
            <person name="Idonuma A."/>
            <person name="Iijima M."/>
            <person name="Ikeda M."/>
            <person name="Ikeno M."/>
            <person name="Ito S."/>
            <person name="Ito T."/>
            <person name="Ito Y."/>
            <person name="Ito Y."/>
            <person name="Iwabuchi A."/>
            <person name="Kamiya K."/>
            <person name="Karasawa W."/>
            <person name="Katagiri S."/>
            <person name="Kikuta A."/>
            <person name="Kobayashi N."/>
            <person name="Kono I."/>
            <person name="Machita K."/>
            <person name="Maehara T."/>
            <person name="Mizuno H."/>
            <person name="Mizubayashi T."/>
            <person name="Mukai Y."/>
            <person name="Nagasaki H."/>
            <person name="Nakashima M."/>
            <person name="Nakama Y."/>
            <person name="Nakamichi Y."/>
            <person name="Nakamura M."/>
            <person name="Namiki N."/>
            <person name="Negishi M."/>
            <person name="Ohta I."/>
            <person name="Ono N."/>
            <person name="Saji S."/>
            <person name="Sakai K."/>
            <person name="Shibata M."/>
            <person name="Shimokawa T."/>
            <person name="Shomura A."/>
            <person name="Song J."/>
            <person name="Takazaki Y."/>
            <person name="Terasawa K."/>
            <person name="Tsuji K."/>
            <person name="Waki K."/>
            <person name="Yamagata H."/>
            <person name="Yamane H."/>
            <person name="Yoshiki S."/>
            <person name="Yoshihara R."/>
            <person name="Yukawa K."/>
            <person name="Zhong H."/>
            <person name="Iwama H."/>
            <person name="Endo T."/>
            <person name="Ito H."/>
            <person name="Hahn J.H."/>
            <person name="Kim H.-I."/>
            <person name="Eun M.-Y."/>
            <person name="Yano M."/>
            <person name="Jiang J."/>
            <person name="Gojobori T."/>
        </authorList>
    </citation>
    <scope>NUCLEOTIDE SEQUENCE [LARGE SCALE GENOMIC DNA]</scope>
    <source>
        <strain>cv. Nipponbare</strain>
    </source>
</reference>
<reference key="3">
    <citation type="journal article" date="2005" name="Nature">
        <title>The map-based sequence of the rice genome.</title>
        <authorList>
            <consortium name="International rice genome sequencing project (IRGSP)"/>
        </authorList>
    </citation>
    <scope>NUCLEOTIDE SEQUENCE [LARGE SCALE GENOMIC DNA]</scope>
    <source>
        <strain>cv. Nipponbare</strain>
    </source>
</reference>
<reference key="4">
    <citation type="journal article" date="2008" name="Nucleic Acids Res.">
        <title>The rice annotation project database (RAP-DB): 2008 update.</title>
        <authorList>
            <consortium name="The rice annotation project (RAP)"/>
        </authorList>
    </citation>
    <scope>GENOME REANNOTATION</scope>
    <source>
        <strain>cv. Nipponbare</strain>
    </source>
</reference>
<reference key="5">
    <citation type="journal article" date="2013" name="Rice">
        <title>Improvement of the Oryza sativa Nipponbare reference genome using next generation sequence and optical map data.</title>
        <authorList>
            <person name="Kawahara Y."/>
            <person name="de la Bastide M."/>
            <person name="Hamilton J.P."/>
            <person name="Kanamori H."/>
            <person name="McCombie W.R."/>
            <person name="Ouyang S."/>
            <person name="Schwartz D.C."/>
            <person name="Tanaka T."/>
            <person name="Wu J."/>
            <person name="Zhou S."/>
            <person name="Childs K.L."/>
            <person name="Davidson R.M."/>
            <person name="Lin H."/>
            <person name="Quesada-Ocampo L."/>
            <person name="Vaillancourt B."/>
            <person name="Sakai H."/>
            <person name="Lee S.S."/>
            <person name="Kim J."/>
            <person name="Numa H."/>
            <person name="Itoh T."/>
            <person name="Buell C.R."/>
            <person name="Matsumoto T."/>
        </authorList>
    </citation>
    <scope>GENOME REANNOTATION</scope>
    <source>
        <strain>cv. Nipponbare</strain>
    </source>
</reference>
<reference key="6">
    <citation type="journal article" date="2003" name="Science">
        <title>Collection, mapping, and annotation of over 28,000 cDNA clones from japonica rice.</title>
        <authorList>
            <consortium name="The rice full-length cDNA consortium"/>
        </authorList>
    </citation>
    <scope>NUCLEOTIDE SEQUENCE [LARGE SCALE MRNA]</scope>
    <source>
        <strain>cv. Nipponbare</strain>
    </source>
</reference>
<reference key="7">
    <citation type="journal article" date="2003" name="Plant J.">
        <title>Increased tryptophan decarboxylase and monoamine oxidase activities induce Sekiguchi lesion formation in rice infected with Magnaporthe grisea.</title>
        <authorList>
            <person name="Ueno M."/>
            <person name="Shibata H."/>
            <person name="Kihara J."/>
            <person name="Honda Y."/>
            <person name="Arase S."/>
        </authorList>
    </citation>
    <scope>FUNCTION</scope>
</reference>
<reference key="8">
    <citation type="journal article" date="2007" name="Planta">
        <title>Characterization of rice tryptophan decarboxylases and their direct involvement in serotonin biosynthesis in transgenic rice.</title>
        <authorList>
            <person name="Kang S."/>
            <person name="Kang K."/>
            <person name="Lee K."/>
            <person name="Back K."/>
        </authorList>
    </citation>
    <scope>FUNCTION</scope>
    <scope>CATALYTIC ACTIVITY</scope>
    <scope>BIOPHYSICOCHEMICAL PROPERTIES</scope>
</reference>
<dbReference type="EC" id="4.1.1.25" evidence="4"/>
<dbReference type="EMBL" id="AB162137">
    <property type="protein sequence ID" value="BAD35168.1"/>
    <property type="molecule type" value="Genomic_DNA"/>
</dbReference>
<dbReference type="EMBL" id="AP003106">
    <property type="protein sequence ID" value="BAB56067.1"/>
    <property type="molecule type" value="Genomic_DNA"/>
</dbReference>
<dbReference type="EMBL" id="AP008207">
    <property type="protein sequence ID" value="BAF06290.1"/>
    <property type="molecule type" value="Genomic_DNA"/>
</dbReference>
<dbReference type="EMBL" id="AK065830">
    <property type="protein sequence ID" value="BAG89694.1"/>
    <property type="molecule type" value="mRNA"/>
</dbReference>
<dbReference type="EMBL" id="AP014957">
    <property type="protein sequence ID" value="BAS74545.1"/>
    <property type="molecule type" value="Genomic_DNA"/>
</dbReference>
<dbReference type="SMR" id="Q94EE9"/>
<dbReference type="FunCoup" id="Q94EE9">
    <property type="interactions" value="11"/>
</dbReference>
<dbReference type="STRING" id="39947.Q94EE9"/>
<dbReference type="PaxDb" id="39947-Q94EE9"/>
<dbReference type="EnsemblPlants" id="Os01t0770200-01">
    <property type="protein sequence ID" value="Os01t0770200-01"/>
    <property type="gene ID" value="Os01g0770200"/>
</dbReference>
<dbReference type="GeneID" id="4325604"/>
<dbReference type="Gramene" id="Os01t0770200-01">
    <property type="protein sequence ID" value="Os01t0770200-01"/>
    <property type="gene ID" value="Os01g0770200"/>
</dbReference>
<dbReference type="KEGG" id="dosa:Os01g0770200"/>
<dbReference type="KEGG" id="osa:4325604"/>
<dbReference type="eggNOG" id="KOG0628">
    <property type="taxonomic scope" value="Eukaryota"/>
</dbReference>
<dbReference type="HOGENOM" id="CLU_011856_3_1_1"/>
<dbReference type="InParanoid" id="Q94EE9"/>
<dbReference type="OMA" id="VHWNHPR"/>
<dbReference type="OrthoDB" id="639767at2759"/>
<dbReference type="BRENDA" id="4.1.1.25">
    <property type="organism ID" value="4460"/>
</dbReference>
<dbReference type="PlantReactome" id="R-OSA-1119344">
    <property type="pathway name" value="Hydroxycinnamic acid serotonin amides biosynthesis"/>
</dbReference>
<dbReference type="PlantReactome" id="R-OSA-1119438">
    <property type="pathway name" value="Secologanin and strictosidine biosynthesis"/>
</dbReference>
<dbReference type="PlantReactome" id="R-OSA-1119486">
    <property type="pathway name" value="IAA biosynthesis I"/>
</dbReference>
<dbReference type="Proteomes" id="UP000000763">
    <property type="component" value="Chromosome 1"/>
</dbReference>
<dbReference type="Proteomes" id="UP000059680">
    <property type="component" value="Chromosome 1"/>
</dbReference>
<dbReference type="GO" id="GO:0005737">
    <property type="term" value="C:cytoplasm"/>
    <property type="evidence" value="ECO:0000318"/>
    <property type="project" value="GO_Central"/>
</dbReference>
<dbReference type="GO" id="GO:0016831">
    <property type="term" value="F:carboxy-lyase activity"/>
    <property type="evidence" value="ECO:0000318"/>
    <property type="project" value="GO_Central"/>
</dbReference>
<dbReference type="GO" id="GO:0030170">
    <property type="term" value="F:pyridoxal phosphate binding"/>
    <property type="evidence" value="ECO:0007669"/>
    <property type="project" value="InterPro"/>
</dbReference>
<dbReference type="GO" id="GO:0004837">
    <property type="term" value="F:tyrosine decarboxylase activity"/>
    <property type="evidence" value="ECO:0000314"/>
    <property type="project" value="UniProtKB"/>
</dbReference>
<dbReference type="GO" id="GO:0006520">
    <property type="term" value="P:amino acid metabolic process"/>
    <property type="evidence" value="ECO:0007669"/>
    <property type="project" value="InterPro"/>
</dbReference>
<dbReference type="GO" id="GO:0019752">
    <property type="term" value="P:carboxylic acid metabolic process"/>
    <property type="evidence" value="ECO:0007669"/>
    <property type="project" value="InterPro"/>
</dbReference>
<dbReference type="GO" id="GO:1901695">
    <property type="term" value="P:tyramine biosynthetic process"/>
    <property type="evidence" value="ECO:0000314"/>
    <property type="project" value="UniProtKB"/>
</dbReference>
<dbReference type="FunFam" id="3.40.640.10:FF:000025">
    <property type="entry name" value="Histidine decarboxylase"/>
    <property type="match status" value="1"/>
</dbReference>
<dbReference type="FunFam" id="3.90.1150.10:FF:000018">
    <property type="entry name" value="Histidine decarboxylase"/>
    <property type="match status" value="1"/>
</dbReference>
<dbReference type="Gene3D" id="3.90.1150.10">
    <property type="entry name" value="Aspartate Aminotransferase, domain 1"/>
    <property type="match status" value="1"/>
</dbReference>
<dbReference type="Gene3D" id="1.20.1340.10">
    <property type="entry name" value="dopa decarboxylase, N-terminal domain"/>
    <property type="match status" value="1"/>
</dbReference>
<dbReference type="Gene3D" id="3.40.640.10">
    <property type="entry name" value="Type I PLP-dependent aspartate aminotransferase-like (Major domain)"/>
    <property type="match status" value="1"/>
</dbReference>
<dbReference type="InterPro" id="IPR010977">
    <property type="entry name" value="Aromatic_deC"/>
</dbReference>
<dbReference type="InterPro" id="IPR002129">
    <property type="entry name" value="PyrdxlP-dep_de-COase"/>
</dbReference>
<dbReference type="InterPro" id="IPR015424">
    <property type="entry name" value="PyrdxlP-dep_Trfase"/>
</dbReference>
<dbReference type="InterPro" id="IPR015421">
    <property type="entry name" value="PyrdxlP-dep_Trfase_major"/>
</dbReference>
<dbReference type="InterPro" id="IPR015422">
    <property type="entry name" value="PyrdxlP-dep_Trfase_small"/>
</dbReference>
<dbReference type="PANTHER" id="PTHR11999">
    <property type="entry name" value="GROUP II PYRIDOXAL-5-PHOSPHATE DECARBOXYLASE"/>
    <property type="match status" value="1"/>
</dbReference>
<dbReference type="PANTHER" id="PTHR11999:SF96">
    <property type="entry name" value="TYROSINE DECARBOXYLASE"/>
    <property type="match status" value="1"/>
</dbReference>
<dbReference type="Pfam" id="PF00282">
    <property type="entry name" value="Pyridoxal_deC"/>
    <property type="match status" value="1"/>
</dbReference>
<dbReference type="PRINTS" id="PR00800">
    <property type="entry name" value="YHDCRBOXLASE"/>
</dbReference>
<dbReference type="SUPFAM" id="SSF53383">
    <property type="entry name" value="PLP-dependent transferases"/>
    <property type="match status" value="1"/>
</dbReference>
<proteinExistence type="evidence at protein level"/>
<comment type="function">
    <text evidence="3 4">Catalyzes the decarboxylation of L-tyrosine to tyramine, which can be converted to the hydroxycinnamic acid amides feruloyltyramine and 4-coumaroyltyramine (PubMed:17763868). Possesses low tryptophan decarboxylase activity (PubMed:14535886).</text>
</comment>
<comment type="catalytic activity">
    <reaction evidence="4">
        <text>L-tyrosine + H(+) = tyramine + CO2</text>
        <dbReference type="Rhea" id="RHEA:14345"/>
        <dbReference type="ChEBI" id="CHEBI:15378"/>
        <dbReference type="ChEBI" id="CHEBI:16526"/>
        <dbReference type="ChEBI" id="CHEBI:58315"/>
        <dbReference type="ChEBI" id="CHEBI:327995"/>
        <dbReference type="EC" id="4.1.1.25"/>
    </reaction>
</comment>
<comment type="cofactor">
    <cofactor evidence="1">
        <name>pyridoxal 5'-phosphate</name>
        <dbReference type="ChEBI" id="CHEBI:597326"/>
    </cofactor>
</comment>
<comment type="similarity">
    <text evidence="7">Belongs to the group II decarboxylase family.</text>
</comment>
<keyword id="KW-0210">Decarboxylase</keyword>
<keyword id="KW-0456">Lyase</keyword>
<keyword id="KW-0663">Pyridoxal phosphate</keyword>
<keyword id="KW-1185">Reference proteome</keyword>
<accession>Q94EE9</accession>
<accession>Q6BD07</accession>
<organism>
    <name type="scientific">Oryza sativa subsp. japonica</name>
    <name type="common">Rice</name>
    <dbReference type="NCBI Taxonomy" id="39947"/>
    <lineage>
        <taxon>Eukaryota</taxon>
        <taxon>Viridiplantae</taxon>
        <taxon>Streptophyta</taxon>
        <taxon>Embryophyta</taxon>
        <taxon>Tracheophyta</taxon>
        <taxon>Spermatophyta</taxon>
        <taxon>Magnoliopsida</taxon>
        <taxon>Liliopsida</taxon>
        <taxon>Poales</taxon>
        <taxon>Poaceae</taxon>
        <taxon>BOP clade</taxon>
        <taxon>Oryzoideae</taxon>
        <taxon>Oryzeae</taxon>
        <taxon>Oryzinae</taxon>
        <taxon>Oryza</taxon>
        <taxon>Oryza sativa</taxon>
    </lineage>
</organism>
<gene>
    <name evidence="6" type="primary">TYDC</name>
    <name evidence="5" type="synonym">TDC</name>
    <name evidence="9" type="ordered locus">Os01g0770200</name>
    <name evidence="7" type="ordered locus">LOC_Os01g56380</name>
    <name evidence="8" type="ORF">P0665A11.14</name>
</gene>
<name>TYDC_ORYSJ</name>